<organism>
    <name type="scientific">Escherichia coli O127:H6 (strain E2348/69 / EPEC)</name>
    <dbReference type="NCBI Taxonomy" id="574521"/>
    <lineage>
        <taxon>Bacteria</taxon>
        <taxon>Pseudomonadati</taxon>
        <taxon>Pseudomonadota</taxon>
        <taxon>Gammaproteobacteria</taxon>
        <taxon>Enterobacterales</taxon>
        <taxon>Enterobacteriaceae</taxon>
        <taxon>Escherichia</taxon>
    </lineage>
</organism>
<reference key="1">
    <citation type="journal article" date="2009" name="J. Bacteriol.">
        <title>Complete genome sequence and comparative genome analysis of enteropathogenic Escherichia coli O127:H6 strain E2348/69.</title>
        <authorList>
            <person name="Iguchi A."/>
            <person name="Thomson N.R."/>
            <person name="Ogura Y."/>
            <person name="Saunders D."/>
            <person name="Ooka T."/>
            <person name="Henderson I.R."/>
            <person name="Harris D."/>
            <person name="Asadulghani M."/>
            <person name="Kurokawa K."/>
            <person name="Dean P."/>
            <person name="Kenny B."/>
            <person name="Quail M.A."/>
            <person name="Thurston S."/>
            <person name="Dougan G."/>
            <person name="Hayashi T."/>
            <person name="Parkhill J."/>
            <person name="Frankel G."/>
        </authorList>
    </citation>
    <scope>NUCLEOTIDE SEQUENCE [LARGE SCALE GENOMIC DNA]</scope>
    <source>
        <strain>E2348/69 / EPEC</strain>
    </source>
</reference>
<feature type="chain" id="PRO_1000164568" description="Orotidine 5'-phosphate decarboxylase">
    <location>
        <begin position="1"/>
        <end position="245"/>
    </location>
</feature>
<feature type="active site" description="Proton donor" evidence="1">
    <location>
        <position position="73"/>
    </location>
</feature>
<feature type="binding site" evidence="1">
    <location>
        <position position="22"/>
    </location>
    <ligand>
        <name>substrate</name>
    </ligand>
</feature>
<feature type="binding site" evidence="1">
    <location>
        <position position="44"/>
    </location>
    <ligand>
        <name>substrate</name>
    </ligand>
</feature>
<feature type="binding site" evidence="1">
    <location>
        <begin position="71"/>
        <end position="80"/>
    </location>
    <ligand>
        <name>substrate</name>
    </ligand>
</feature>
<feature type="binding site" evidence="1">
    <location>
        <position position="131"/>
    </location>
    <ligand>
        <name>substrate</name>
    </ligand>
</feature>
<feature type="binding site" evidence="1">
    <location>
        <position position="192"/>
    </location>
    <ligand>
        <name>substrate</name>
    </ligand>
</feature>
<feature type="binding site" evidence="1">
    <location>
        <position position="201"/>
    </location>
    <ligand>
        <name>substrate</name>
    </ligand>
</feature>
<feature type="binding site" evidence="1">
    <location>
        <position position="221"/>
    </location>
    <ligand>
        <name>substrate</name>
    </ligand>
</feature>
<feature type="binding site" evidence="1">
    <location>
        <position position="222"/>
    </location>
    <ligand>
        <name>substrate</name>
    </ligand>
</feature>
<comment type="function">
    <text evidence="1">Catalyzes the decarboxylation of orotidine 5'-monophosphate (OMP) to uridine 5'-monophosphate (UMP).</text>
</comment>
<comment type="catalytic activity">
    <reaction evidence="1">
        <text>orotidine 5'-phosphate + H(+) = UMP + CO2</text>
        <dbReference type="Rhea" id="RHEA:11596"/>
        <dbReference type="ChEBI" id="CHEBI:15378"/>
        <dbReference type="ChEBI" id="CHEBI:16526"/>
        <dbReference type="ChEBI" id="CHEBI:57538"/>
        <dbReference type="ChEBI" id="CHEBI:57865"/>
        <dbReference type="EC" id="4.1.1.23"/>
    </reaction>
</comment>
<comment type="pathway">
    <text evidence="1">Pyrimidine metabolism; UMP biosynthesis via de novo pathway; UMP from orotate: step 2/2.</text>
</comment>
<comment type="subunit">
    <text evidence="1">Homodimer.</text>
</comment>
<comment type="similarity">
    <text evidence="1">Belongs to the OMP decarboxylase family. Type 1 subfamily.</text>
</comment>
<gene>
    <name evidence="1" type="primary">pyrF</name>
    <name type="ordered locus">E2348C_1473</name>
</gene>
<keyword id="KW-0210">Decarboxylase</keyword>
<keyword id="KW-0456">Lyase</keyword>
<keyword id="KW-0665">Pyrimidine biosynthesis</keyword>
<keyword id="KW-1185">Reference proteome</keyword>
<proteinExistence type="inferred from homology"/>
<sequence length="245" mass="26234">MTLTASSSSRAVTNSPVVVALDYHNRDAAMAFIDKIDPRDCRLKVGKEMFTLFGPQFVRELQQRGFDIFLDLKFHDIPNTAAHAVAAAADLGVWMVNVHASGGARMMAAAREALVPFGKDAPLLIAVTVLTSMEASDLADLGVTLSPADYAERLAALTQKCGLDGVVCSAQEAVRFKQVFGQEFKLVTPGIRPQGSDAGDQRRIMTPEQALSAGVDYMVIGRPVTQSVDPAQTLKAINASLQRSA</sequence>
<dbReference type="EC" id="4.1.1.23" evidence="1"/>
<dbReference type="EMBL" id="FM180568">
    <property type="protein sequence ID" value="CAS09021.1"/>
    <property type="molecule type" value="Genomic_DNA"/>
</dbReference>
<dbReference type="RefSeq" id="WP_001339668.1">
    <property type="nucleotide sequence ID" value="NC_011601.1"/>
</dbReference>
<dbReference type="SMR" id="B7UR89"/>
<dbReference type="KEGG" id="ecg:E2348C_1473"/>
<dbReference type="HOGENOM" id="CLU_067069_0_0_6"/>
<dbReference type="UniPathway" id="UPA00070">
    <property type="reaction ID" value="UER00120"/>
</dbReference>
<dbReference type="Proteomes" id="UP000008205">
    <property type="component" value="Chromosome"/>
</dbReference>
<dbReference type="GO" id="GO:0005829">
    <property type="term" value="C:cytosol"/>
    <property type="evidence" value="ECO:0007669"/>
    <property type="project" value="TreeGrafter"/>
</dbReference>
<dbReference type="GO" id="GO:0004590">
    <property type="term" value="F:orotidine-5'-phosphate decarboxylase activity"/>
    <property type="evidence" value="ECO:0007669"/>
    <property type="project" value="UniProtKB-UniRule"/>
</dbReference>
<dbReference type="GO" id="GO:0006207">
    <property type="term" value="P:'de novo' pyrimidine nucleobase biosynthetic process"/>
    <property type="evidence" value="ECO:0007669"/>
    <property type="project" value="InterPro"/>
</dbReference>
<dbReference type="GO" id="GO:0044205">
    <property type="term" value="P:'de novo' UMP biosynthetic process"/>
    <property type="evidence" value="ECO:0007669"/>
    <property type="project" value="UniProtKB-UniRule"/>
</dbReference>
<dbReference type="CDD" id="cd04725">
    <property type="entry name" value="OMP_decarboxylase_like"/>
    <property type="match status" value="1"/>
</dbReference>
<dbReference type="FunFam" id="3.20.20.70:FF:000015">
    <property type="entry name" value="Orotidine 5'-phosphate decarboxylase"/>
    <property type="match status" value="1"/>
</dbReference>
<dbReference type="Gene3D" id="3.20.20.70">
    <property type="entry name" value="Aldolase class I"/>
    <property type="match status" value="1"/>
</dbReference>
<dbReference type="HAMAP" id="MF_01200_B">
    <property type="entry name" value="OMPdecase_type1_B"/>
    <property type="match status" value="1"/>
</dbReference>
<dbReference type="InterPro" id="IPR013785">
    <property type="entry name" value="Aldolase_TIM"/>
</dbReference>
<dbReference type="InterPro" id="IPR014732">
    <property type="entry name" value="OMPdecase"/>
</dbReference>
<dbReference type="InterPro" id="IPR018089">
    <property type="entry name" value="OMPdecase_AS"/>
</dbReference>
<dbReference type="InterPro" id="IPR047596">
    <property type="entry name" value="OMPdecase_bac"/>
</dbReference>
<dbReference type="InterPro" id="IPR001754">
    <property type="entry name" value="OMPdeCOase_dom"/>
</dbReference>
<dbReference type="InterPro" id="IPR011060">
    <property type="entry name" value="RibuloseP-bd_barrel"/>
</dbReference>
<dbReference type="NCBIfam" id="NF001273">
    <property type="entry name" value="PRK00230.1"/>
    <property type="match status" value="1"/>
</dbReference>
<dbReference type="NCBIfam" id="TIGR01740">
    <property type="entry name" value="pyrF"/>
    <property type="match status" value="1"/>
</dbReference>
<dbReference type="PANTHER" id="PTHR32119">
    <property type="entry name" value="OROTIDINE 5'-PHOSPHATE DECARBOXYLASE"/>
    <property type="match status" value="1"/>
</dbReference>
<dbReference type="PANTHER" id="PTHR32119:SF2">
    <property type="entry name" value="OROTIDINE 5'-PHOSPHATE DECARBOXYLASE"/>
    <property type="match status" value="1"/>
</dbReference>
<dbReference type="Pfam" id="PF00215">
    <property type="entry name" value="OMPdecase"/>
    <property type="match status" value="1"/>
</dbReference>
<dbReference type="SMART" id="SM00934">
    <property type="entry name" value="OMPdecase"/>
    <property type="match status" value="1"/>
</dbReference>
<dbReference type="SUPFAM" id="SSF51366">
    <property type="entry name" value="Ribulose-phoshate binding barrel"/>
    <property type="match status" value="1"/>
</dbReference>
<dbReference type="PROSITE" id="PS00156">
    <property type="entry name" value="OMPDECASE"/>
    <property type="match status" value="1"/>
</dbReference>
<evidence type="ECO:0000255" key="1">
    <source>
        <dbReference type="HAMAP-Rule" id="MF_01200"/>
    </source>
</evidence>
<accession>B7UR89</accession>
<protein>
    <recommendedName>
        <fullName evidence="1">Orotidine 5'-phosphate decarboxylase</fullName>
        <ecNumber evidence="1">4.1.1.23</ecNumber>
    </recommendedName>
    <alternativeName>
        <fullName evidence="1">OMP decarboxylase</fullName>
        <shortName evidence="1">OMPDCase</shortName>
        <shortName evidence="1">OMPdecase</shortName>
    </alternativeName>
</protein>
<name>PYRF_ECO27</name>